<reference key="1">
    <citation type="journal article" date="2008" name="DNA Res.">
        <title>Comparative genome analysis of Lactobacillus reuteri and Lactobacillus fermentum reveal a genomic island for reuterin and cobalamin production.</title>
        <authorList>
            <person name="Morita H."/>
            <person name="Toh H."/>
            <person name="Fukuda S."/>
            <person name="Horikawa H."/>
            <person name="Oshima K."/>
            <person name="Suzuki T."/>
            <person name="Murakami M."/>
            <person name="Hisamatsu S."/>
            <person name="Kato Y."/>
            <person name="Takizawa T."/>
            <person name="Fukuoka H."/>
            <person name="Yoshimura T."/>
            <person name="Itoh K."/>
            <person name="O'Sullivan D.J."/>
            <person name="McKay L.L."/>
            <person name="Ohno H."/>
            <person name="Kikuchi J."/>
            <person name="Masaoka T."/>
            <person name="Hattori M."/>
        </authorList>
    </citation>
    <scope>NUCLEOTIDE SEQUENCE [LARGE SCALE GENOMIC DNA]</scope>
    <source>
        <strain>NBRC 3956 / LMG 18251</strain>
    </source>
</reference>
<feature type="chain" id="PRO_1000117465" description="Shikimate kinase">
    <location>
        <begin position="1"/>
        <end position="173"/>
    </location>
</feature>
<feature type="binding site" evidence="1">
    <location>
        <begin position="10"/>
        <end position="15"/>
    </location>
    <ligand>
        <name>ATP</name>
        <dbReference type="ChEBI" id="CHEBI:30616"/>
    </ligand>
</feature>
<feature type="binding site" evidence="1">
    <location>
        <position position="14"/>
    </location>
    <ligand>
        <name>Mg(2+)</name>
        <dbReference type="ChEBI" id="CHEBI:18420"/>
    </ligand>
</feature>
<feature type="binding site" evidence="1">
    <location>
        <position position="32"/>
    </location>
    <ligand>
        <name>substrate</name>
    </ligand>
</feature>
<feature type="binding site" evidence="1">
    <location>
        <position position="56"/>
    </location>
    <ligand>
        <name>substrate</name>
    </ligand>
</feature>
<feature type="binding site" evidence="1">
    <location>
        <position position="78"/>
    </location>
    <ligand>
        <name>substrate</name>
    </ligand>
</feature>
<feature type="binding site" evidence="1">
    <location>
        <position position="117"/>
    </location>
    <ligand>
        <name>ATP</name>
        <dbReference type="ChEBI" id="CHEBI:30616"/>
    </ligand>
</feature>
<feature type="binding site" evidence="1">
    <location>
        <position position="135"/>
    </location>
    <ligand>
        <name>substrate</name>
    </ligand>
</feature>
<organism>
    <name type="scientific">Limosilactobacillus fermentum (strain NBRC 3956 / LMG 18251)</name>
    <name type="common">Lactobacillus fermentum</name>
    <dbReference type="NCBI Taxonomy" id="334390"/>
    <lineage>
        <taxon>Bacteria</taxon>
        <taxon>Bacillati</taxon>
        <taxon>Bacillota</taxon>
        <taxon>Bacilli</taxon>
        <taxon>Lactobacillales</taxon>
        <taxon>Lactobacillaceae</taxon>
        <taxon>Limosilactobacillus</taxon>
    </lineage>
</organism>
<sequence length="173" mass="18666">MNLILVGFMGSGKTTVSTLLGEALQQPVYDLDDEVEKAACKPIPQIFADDGEASFRDLEHSALKEVVKRRQGILATGGGTPVAERNQRLLEHAQAPVILLTASPAETARRLGDGEGRPLASKLTPAELADLQDARRPAYDRCADLTIRTDKLSPTAVAKLIIAFLRIHQDQSA</sequence>
<protein>
    <recommendedName>
        <fullName evidence="1">Shikimate kinase</fullName>
        <shortName evidence="1">SK</shortName>
        <ecNumber evidence="1">2.7.1.71</ecNumber>
    </recommendedName>
</protein>
<gene>
    <name evidence="1" type="primary">aroK</name>
    <name type="ordered locus">LAF_1104</name>
</gene>
<comment type="function">
    <text evidence="1">Catalyzes the specific phosphorylation of the 3-hydroxyl group of shikimic acid using ATP as a cosubstrate.</text>
</comment>
<comment type="catalytic activity">
    <reaction evidence="1">
        <text>shikimate + ATP = 3-phosphoshikimate + ADP + H(+)</text>
        <dbReference type="Rhea" id="RHEA:13121"/>
        <dbReference type="ChEBI" id="CHEBI:15378"/>
        <dbReference type="ChEBI" id="CHEBI:30616"/>
        <dbReference type="ChEBI" id="CHEBI:36208"/>
        <dbReference type="ChEBI" id="CHEBI:145989"/>
        <dbReference type="ChEBI" id="CHEBI:456216"/>
        <dbReference type="EC" id="2.7.1.71"/>
    </reaction>
</comment>
<comment type="cofactor">
    <cofactor evidence="1">
        <name>Mg(2+)</name>
        <dbReference type="ChEBI" id="CHEBI:18420"/>
    </cofactor>
    <text evidence="1">Binds 1 Mg(2+) ion per subunit.</text>
</comment>
<comment type="pathway">
    <text evidence="1">Metabolic intermediate biosynthesis; chorismate biosynthesis; chorismate from D-erythrose 4-phosphate and phosphoenolpyruvate: step 5/7.</text>
</comment>
<comment type="subunit">
    <text evidence="1">Monomer.</text>
</comment>
<comment type="subcellular location">
    <subcellularLocation>
        <location evidence="1">Cytoplasm</location>
    </subcellularLocation>
</comment>
<comment type="similarity">
    <text evidence="1">Belongs to the shikimate kinase family.</text>
</comment>
<evidence type="ECO:0000255" key="1">
    <source>
        <dbReference type="HAMAP-Rule" id="MF_00109"/>
    </source>
</evidence>
<name>AROK_LIMF3</name>
<dbReference type="EC" id="2.7.1.71" evidence="1"/>
<dbReference type="EMBL" id="AP008937">
    <property type="protein sequence ID" value="BAG27440.1"/>
    <property type="molecule type" value="Genomic_DNA"/>
</dbReference>
<dbReference type="RefSeq" id="WP_012391350.1">
    <property type="nucleotide sequence ID" value="NC_010610.1"/>
</dbReference>
<dbReference type="SMR" id="B2GCQ8"/>
<dbReference type="KEGG" id="lfe:LAF_1104"/>
<dbReference type="PATRIC" id="fig|334390.5.peg.1221"/>
<dbReference type="eggNOG" id="COG0703">
    <property type="taxonomic scope" value="Bacteria"/>
</dbReference>
<dbReference type="HOGENOM" id="CLU_057607_4_0_9"/>
<dbReference type="UniPathway" id="UPA00053">
    <property type="reaction ID" value="UER00088"/>
</dbReference>
<dbReference type="Proteomes" id="UP000001697">
    <property type="component" value="Chromosome"/>
</dbReference>
<dbReference type="GO" id="GO:0005829">
    <property type="term" value="C:cytosol"/>
    <property type="evidence" value="ECO:0007669"/>
    <property type="project" value="TreeGrafter"/>
</dbReference>
<dbReference type="GO" id="GO:0005524">
    <property type="term" value="F:ATP binding"/>
    <property type="evidence" value="ECO:0007669"/>
    <property type="project" value="UniProtKB-UniRule"/>
</dbReference>
<dbReference type="GO" id="GO:0000287">
    <property type="term" value="F:magnesium ion binding"/>
    <property type="evidence" value="ECO:0007669"/>
    <property type="project" value="UniProtKB-UniRule"/>
</dbReference>
<dbReference type="GO" id="GO:0004765">
    <property type="term" value="F:shikimate kinase activity"/>
    <property type="evidence" value="ECO:0007669"/>
    <property type="project" value="UniProtKB-UniRule"/>
</dbReference>
<dbReference type="GO" id="GO:0008652">
    <property type="term" value="P:amino acid biosynthetic process"/>
    <property type="evidence" value="ECO:0007669"/>
    <property type="project" value="UniProtKB-KW"/>
</dbReference>
<dbReference type="GO" id="GO:0009073">
    <property type="term" value="P:aromatic amino acid family biosynthetic process"/>
    <property type="evidence" value="ECO:0007669"/>
    <property type="project" value="UniProtKB-KW"/>
</dbReference>
<dbReference type="GO" id="GO:0009423">
    <property type="term" value="P:chorismate biosynthetic process"/>
    <property type="evidence" value="ECO:0007669"/>
    <property type="project" value="UniProtKB-UniRule"/>
</dbReference>
<dbReference type="CDD" id="cd00464">
    <property type="entry name" value="SK"/>
    <property type="match status" value="1"/>
</dbReference>
<dbReference type="Gene3D" id="3.40.50.300">
    <property type="entry name" value="P-loop containing nucleotide triphosphate hydrolases"/>
    <property type="match status" value="1"/>
</dbReference>
<dbReference type="HAMAP" id="MF_00109">
    <property type="entry name" value="Shikimate_kinase"/>
    <property type="match status" value="1"/>
</dbReference>
<dbReference type="InterPro" id="IPR027417">
    <property type="entry name" value="P-loop_NTPase"/>
</dbReference>
<dbReference type="InterPro" id="IPR031322">
    <property type="entry name" value="Shikimate/glucono_kinase"/>
</dbReference>
<dbReference type="InterPro" id="IPR000623">
    <property type="entry name" value="Shikimate_kinase/TSH1"/>
</dbReference>
<dbReference type="PANTHER" id="PTHR21087">
    <property type="entry name" value="SHIKIMATE KINASE"/>
    <property type="match status" value="1"/>
</dbReference>
<dbReference type="PANTHER" id="PTHR21087:SF16">
    <property type="entry name" value="SHIKIMATE KINASE 1, CHLOROPLASTIC"/>
    <property type="match status" value="1"/>
</dbReference>
<dbReference type="Pfam" id="PF01202">
    <property type="entry name" value="SKI"/>
    <property type="match status" value="1"/>
</dbReference>
<dbReference type="PRINTS" id="PR01100">
    <property type="entry name" value="SHIKIMTKNASE"/>
</dbReference>
<dbReference type="SUPFAM" id="SSF52540">
    <property type="entry name" value="P-loop containing nucleoside triphosphate hydrolases"/>
    <property type="match status" value="1"/>
</dbReference>
<accession>B2GCQ8</accession>
<keyword id="KW-0028">Amino-acid biosynthesis</keyword>
<keyword id="KW-0057">Aromatic amino acid biosynthesis</keyword>
<keyword id="KW-0067">ATP-binding</keyword>
<keyword id="KW-0963">Cytoplasm</keyword>
<keyword id="KW-0418">Kinase</keyword>
<keyword id="KW-0460">Magnesium</keyword>
<keyword id="KW-0479">Metal-binding</keyword>
<keyword id="KW-0547">Nucleotide-binding</keyword>
<keyword id="KW-1185">Reference proteome</keyword>
<keyword id="KW-0808">Transferase</keyword>
<proteinExistence type="inferred from homology"/>